<organism>
    <name type="scientific">Escherichia coli (strain K12 / MC4100 / BW2952)</name>
    <dbReference type="NCBI Taxonomy" id="595496"/>
    <lineage>
        <taxon>Bacteria</taxon>
        <taxon>Pseudomonadati</taxon>
        <taxon>Pseudomonadota</taxon>
        <taxon>Gammaproteobacteria</taxon>
        <taxon>Enterobacterales</taxon>
        <taxon>Enterobacteriaceae</taxon>
        <taxon>Escherichia</taxon>
    </lineage>
</organism>
<sequence length="236" mass="25737">MATTHLDVCAVVPAAGFGRRMQTECPKQYLSIGNQTILEHSVHALLAHPRVKRVVIAISPGDSRFAQLPLANHPQITVVDGGDERADSVLAGLKAAGDAQWVLVHDAARPCLHQDDLARLLALSETSRTGGILAAPVRDTMKRAEPGKNAIAHTVDRNGLWHALTPQFFPRELLHDCLTRALNEGATITDEASALEYCGFHPQLVEGRADNIKVTRPEDLALAEFYLTRTIHQENT</sequence>
<comment type="function">
    <text evidence="1">Catalyzes the formation of 4-diphosphocytidyl-2-C-methyl-D-erythritol from CTP and 2-C-methyl-D-erythritol 4-phosphate (MEP).</text>
</comment>
<comment type="catalytic activity">
    <reaction evidence="1">
        <text>2-C-methyl-D-erythritol 4-phosphate + CTP + H(+) = 4-CDP-2-C-methyl-D-erythritol + diphosphate</text>
        <dbReference type="Rhea" id="RHEA:13429"/>
        <dbReference type="ChEBI" id="CHEBI:15378"/>
        <dbReference type="ChEBI" id="CHEBI:33019"/>
        <dbReference type="ChEBI" id="CHEBI:37563"/>
        <dbReference type="ChEBI" id="CHEBI:57823"/>
        <dbReference type="ChEBI" id="CHEBI:58262"/>
        <dbReference type="EC" id="2.7.7.60"/>
    </reaction>
</comment>
<comment type="pathway">
    <text evidence="1">Isoprenoid biosynthesis; isopentenyl diphosphate biosynthesis via DXP pathway; isopentenyl diphosphate from 1-deoxy-D-xylulose 5-phosphate: step 2/6.</text>
</comment>
<comment type="subunit">
    <text evidence="1">Homodimer.</text>
</comment>
<comment type="similarity">
    <text evidence="1">Belongs to the IspD/TarI cytidylyltransferase family. IspD subfamily.</text>
</comment>
<accession>C4ZZQ1</accession>
<name>ISPD_ECOBW</name>
<protein>
    <recommendedName>
        <fullName evidence="1">2-C-methyl-D-erythritol 4-phosphate cytidylyltransferase</fullName>
        <ecNumber evidence="1">2.7.7.60</ecNumber>
    </recommendedName>
    <alternativeName>
        <fullName evidence="1">4-diphosphocytidyl-2C-methyl-D-erythritol synthase</fullName>
    </alternativeName>
    <alternativeName>
        <fullName evidence="1">MEP cytidylyltransferase</fullName>
        <shortName evidence="1">MCT</shortName>
    </alternativeName>
</protein>
<keyword id="KW-0414">Isoprene biosynthesis</keyword>
<keyword id="KW-0548">Nucleotidyltransferase</keyword>
<keyword id="KW-0808">Transferase</keyword>
<proteinExistence type="inferred from homology"/>
<reference key="1">
    <citation type="journal article" date="2009" name="J. Bacteriol.">
        <title>Genomic sequencing reveals regulatory mutations and recombinational events in the widely used MC4100 lineage of Escherichia coli K-12.</title>
        <authorList>
            <person name="Ferenci T."/>
            <person name="Zhou Z."/>
            <person name="Betteridge T."/>
            <person name="Ren Y."/>
            <person name="Liu Y."/>
            <person name="Feng L."/>
            <person name="Reeves P.R."/>
            <person name="Wang L."/>
        </authorList>
    </citation>
    <scope>NUCLEOTIDE SEQUENCE [LARGE SCALE GENOMIC DNA]</scope>
    <source>
        <strain>K12 / MC4100 / BW2952</strain>
    </source>
</reference>
<dbReference type="EC" id="2.7.7.60" evidence="1"/>
<dbReference type="EMBL" id="CP001396">
    <property type="protein sequence ID" value="ACR61840.1"/>
    <property type="molecule type" value="Genomic_DNA"/>
</dbReference>
<dbReference type="RefSeq" id="WP_000246138.1">
    <property type="nucleotide sequence ID" value="NC_012759.1"/>
</dbReference>
<dbReference type="SMR" id="C4ZZQ1"/>
<dbReference type="GeneID" id="93779259"/>
<dbReference type="KEGG" id="ebw:BWG_2483"/>
<dbReference type="HOGENOM" id="CLU_061281_3_1_6"/>
<dbReference type="UniPathway" id="UPA00056">
    <property type="reaction ID" value="UER00093"/>
</dbReference>
<dbReference type="GO" id="GO:0050518">
    <property type="term" value="F:2-C-methyl-D-erythritol 4-phosphate cytidylyltransferase activity"/>
    <property type="evidence" value="ECO:0007669"/>
    <property type="project" value="UniProtKB-UniRule"/>
</dbReference>
<dbReference type="GO" id="GO:0019288">
    <property type="term" value="P:isopentenyl diphosphate biosynthetic process, methylerythritol 4-phosphate pathway"/>
    <property type="evidence" value="ECO:0007669"/>
    <property type="project" value="UniProtKB-UniRule"/>
</dbReference>
<dbReference type="CDD" id="cd02516">
    <property type="entry name" value="CDP-ME_synthetase"/>
    <property type="match status" value="1"/>
</dbReference>
<dbReference type="FunFam" id="3.90.550.10:FF:000003">
    <property type="entry name" value="2-C-methyl-D-erythritol 4-phosphate cytidylyltransferase"/>
    <property type="match status" value="1"/>
</dbReference>
<dbReference type="Gene3D" id="3.90.550.10">
    <property type="entry name" value="Spore Coat Polysaccharide Biosynthesis Protein SpsA, Chain A"/>
    <property type="match status" value="1"/>
</dbReference>
<dbReference type="HAMAP" id="MF_00108">
    <property type="entry name" value="IspD"/>
    <property type="match status" value="1"/>
</dbReference>
<dbReference type="InterPro" id="IPR001228">
    <property type="entry name" value="IspD"/>
</dbReference>
<dbReference type="InterPro" id="IPR034683">
    <property type="entry name" value="IspD/TarI"/>
</dbReference>
<dbReference type="InterPro" id="IPR050088">
    <property type="entry name" value="IspD/TarI_cytidylyltransf_bact"/>
</dbReference>
<dbReference type="InterPro" id="IPR018294">
    <property type="entry name" value="ISPD_synthase_CS"/>
</dbReference>
<dbReference type="InterPro" id="IPR029044">
    <property type="entry name" value="Nucleotide-diphossugar_trans"/>
</dbReference>
<dbReference type="NCBIfam" id="TIGR00453">
    <property type="entry name" value="ispD"/>
    <property type="match status" value="1"/>
</dbReference>
<dbReference type="PANTHER" id="PTHR32125">
    <property type="entry name" value="2-C-METHYL-D-ERYTHRITOL 4-PHOSPHATE CYTIDYLYLTRANSFERASE, CHLOROPLASTIC"/>
    <property type="match status" value="1"/>
</dbReference>
<dbReference type="PANTHER" id="PTHR32125:SF4">
    <property type="entry name" value="2-C-METHYL-D-ERYTHRITOL 4-PHOSPHATE CYTIDYLYLTRANSFERASE, CHLOROPLASTIC"/>
    <property type="match status" value="1"/>
</dbReference>
<dbReference type="Pfam" id="PF01128">
    <property type="entry name" value="IspD"/>
    <property type="match status" value="1"/>
</dbReference>
<dbReference type="SUPFAM" id="SSF53448">
    <property type="entry name" value="Nucleotide-diphospho-sugar transferases"/>
    <property type="match status" value="1"/>
</dbReference>
<dbReference type="PROSITE" id="PS01295">
    <property type="entry name" value="ISPD"/>
    <property type="match status" value="1"/>
</dbReference>
<feature type="chain" id="PRO_1000202891" description="2-C-methyl-D-erythritol 4-phosphate cytidylyltransferase">
    <location>
        <begin position="1"/>
        <end position="236"/>
    </location>
</feature>
<feature type="site" description="Transition state stabilizer" evidence="1">
    <location>
        <position position="20"/>
    </location>
</feature>
<feature type="site" description="Transition state stabilizer" evidence="1">
    <location>
        <position position="27"/>
    </location>
</feature>
<feature type="site" description="Positions MEP for the nucleophilic attack" evidence="1">
    <location>
        <position position="157"/>
    </location>
</feature>
<feature type="site" description="Positions MEP for the nucleophilic attack" evidence="1">
    <location>
        <position position="213"/>
    </location>
</feature>
<evidence type="ECO:0000255" key="1">
    <source>
        <dbReference type="HAMAP-Rule" id="MF_00108"/>
    </source>
</evidence>
<gene>
    <name evidence="1" type="primary">ispD</name>
    <name type="ordered locus">BWG_2483</name>
</gene>